<protein>
    <recommendedName>
        <fullName evidence="2">Small ribosomal subunit protein uS2</fullName>
    </recommendedName>
    <alternativeName>
        <fullName evidence="3">30S ribosomal protein S2</fullName>
    </alternativeName>
</protein>
<accession>Q83SL4</accession>
<accession>Q7UDQ9</accession>
<name>RS2_SHIFL</name>
<feature type="initiator methionine" description="Removed" evidence="1">
    <location>
        <position position="1"/>
    </location>
</feature>
<feature type="chain" id="PRO_0000134234" description="Small ribosomal subunit protein uS2">
    <location>
        <begin position="2"/>
        <end position="241"/>
    </location>
</feature>
<evidence type="ECO:0000250" key="1"/>
<evidence type="ECO:0000255" key="2">
    <source>
        <dbReference type="HAMAP-Rule" id="MF_00291"/>
    </source>
</evidence>
<evidence type="ECO:0000305" key="3"/>
<proteinExistence type="inferred from homology"/>
<dbReference type="EMBL" id="AE005674">
    <property type="protein sequence ID" value="AAN41821.2"/>
    <property type="molecule type" value="Genomic_DNA"/>
</dbReference>
<dbReference type="EMBL" id="AE014073">
    <property type="protein sequence ID" value="AAP15702.1"/>
    <property type="molecule type" value="Genomic_DNA"/>
</dbReference>
<dbReference type="RefSeq" id="NP_706114.2">
    <property type="nucleotide sequence ID" value="NC_004337.2"/>
</dbReference>
<dbReference type="RefSeq" id="WP_000246888.1">
    <property type="nucleotide sequence ID" value="NZ_WPGW01000006.1"/>
</dbReference>
<dbReference type="SMR" id="Q83SL4"/>
<dbReference type="STRING" id="198214.SF0159"/>
<dbReference type="PaxDb" id="198214-SF0159"/>
<dbReference type="GeneID" id="1024473"/>
<dbReference type="KEGG" id="sfl:SF0159"/>
<dbReference type="KEGG" id="sfx:S0162"/>
<dbReference type="PATRIC" id="fig|198214.7.peg.179"/>
<dbReference type="HOGENOM" id="CLU_040318_1_0_6"/>
<dbReference type="Proteomes" id="UP000001006">
    <property type="component" value="Chromosome"/>
</dbReference>
<dbReference type="Proteomes" id="UP000002673">
    <property type="component" value="Chromosome"/>
</dbReference>
<dbReference type="GO" id="GO:0022627">
    <property type="term" value="C:cytosolic small ribosomal subunit"/>
    <property type="evidence" value="ECO:0007669"/>
    <property type="project" value="TreeGrafter"/>
</dbReference>
<dbReference type="GO" id="GO:0003735">
    <property type="term" value="F:structural constituent of ribosome"/>
    <property type="evidence" value="ECO:0007669"/>
    <property type="project" value="InterPro"/>
</dbReference>
<dbReference type="GO" id="GO:0006412">
    <property type="term" value="P:translation"/>
    <property type="evidence" value="ECO:0007669"/>
    <property type="project" value="UniProtKB-UniRule"/>
</dbReference>
<dbReference type="CDD" id="cd01425">
    <property type="entry name" value="RPS2"/>
    <property type="match status" value="1"/>
</dbReference>
<dbReference type="FunFam" id="1.10.287.610:FF:000001">
    <property type="entry name" value="30S ribosomal protein S2"/>
    <property type="match status" value="1"/>
</dbReference>
<dbReference type="Gene3D" id="3.40.50.10490">
    <property type="entry name" value="Glucose-6-phosphate isomerase like protein, domain 1"/>
    <property type="match status" value="1"/>
</dbReference>
<dbReference type="Gene3D" id="1.10.287.610">
    <property type="entry name" value="Helix hairpin bin"/>
    <property type="match status" value="1"/>
</dbReference>
<dbReference type="HAMAP" id="MF_00291_B">
    <property type="entry name" value="Ribosomal_uS2_B"/>
    <property type="match status" value="1"/>
</dbReference>
<dbReference type="InterPro" id="IPR001865">
    <property type="entry name" value="Ribosomal_uS2"/>
</dbReference>
<dbReference type="InterPro" id="IPR005706">
    <property type="entry name" value="Ribosomal_uS2_bac/mit/plastid"/>
</dbReference>
<dbReference type="InterPro" id="IPR018130">
    <property type="entry name" value="Ribosomal_uS2_CS"/>
</dbReference>
<dbReference type="InterPro" id="IPR023591">
    <property type="entry name" value="Ribosomal_uS2_flav_dom_sf"/>
</dbReference>
<dbReference type="NCBIfam" id="TIGR01011">
    <property type="entry name" value="rpsB_bact"/>
    <property type="match status" value="1"/>
</dbReference>
<dbReference type="PANTHER" id="PTHR12534">
    <property type="entry name" value="30S RIBOSOMAL PROTEIN S2 PROKARYOTIC AND ORGANELLAR"/>
    <property type="match status" value="1"/>
</dbReference>
<dbReference type="PANTHER" id="PTHR12534:SF0">
    <property type="entry name" value="SMALL RIBOSOMAL SUBUNIT PROTEIN US2M"/>
    <property type="match status" value="1"/>
</dbReference>
<dbReference type="Pfam" id="PF00318">
    <property type="entry name" value="Ribosomal_S2"/>
    <property type="match status" value="1"/>
</dbReference>
<dbReference type="PRINTS" id="PR00395">
    <property type="entry name" value="RIBOSOMALS2"/>
</dbReference>
<dbReference type="SUPFAM" id="SSF52313">
    <property type="entry name" value="Ribosomal protein S2"/>
    <property type="match status" value="1"/>
</dbReference>
<dbReference type="PROSITE" id="PS00962">
    <property type="entry name" value="RIBOSOMAL_S2_1"/>
    <property type="match status" value="1"/>
</dbReference>
<dbReference type="PROSITE" id="PS00963">
    <property type="entry name" value="RIBOSOMAL_S2_2"/>
    <property type="match status" value="1"/>
</dbReference>
<reference key="1">
    <citation type="journal article" date="2002" name="Nucleic Acids Res.">
        <title>Genome sequence of Shigella flexneri 2a: insights into pathogenicity through comparison with genomes of Escherichia coli K12 and O157.</title>
        <authorList>
            <person name="Jin Q."/>
            <person name="Yuan Z."/>
            <person name="Xu J."/>
            <person name="Wang Y."/>
            <person name="Shen Y."/>
            <person name="Lu W."/>
            <person name="Wang J."/>
            <person name="Liu H."/>
            <person name="Yang J."/>
            <person name="Yang F."/>
            <person name="Zhang X."/>
            <person name="Zhang J."/>
            <person name="Yang G."/>
            <person name="Wu H."/>
            <person name="Qu D."/>
            <person name="Dong J."/>
            <person name="Sun L."/>
            <person name="Xue Y."/>
            <person name="Zhao A."/>
            <person name="Gao Y."/>
            <person name="Zhu J."/>
            <person name="Kan B."/>
            <person name="Ding K."/>
            <person name="Chen S."/>
            <person name="Cheng H."/>
            <person name="Yao Z."/>
            <person name="He B."/>
            <person name="Chen R."/>
            <person name="Ma D."/>
            <person name="Qiang B."/>
            <person name="Wen Y."/>
            <person name="Hou Y."/>
            <person name="Yu J."/>
        </authorList>
    </citation>
    <scope>NUCLEOTIDE SEQUENCE [LARGE SCALE GENOMIC DNA]</scope>
    <source>
        <strain>301 / Serotype 2a</strain>
    </source>
</reference>
<reference key="2">
    <citation type="journal article" date="2003" name="Infect. Immun.">
        <title>Complete genome sequence and comparative genomics of Shigella flexneri serotype 2a strain 2457T.</title>
        <authorList>
            <person name="Wei J."/>
            <person name="Goldberg M.B."/>
            <person name="Burland V."/>
            <person name="Venkatesan M.M."/>
            <person name="Deng W."/>
            <person name="Fournier G."/>
            <person name="Mayhew G.F."/>
            <person name="Plunkett G. III"/>
            <person name="Rose D.J."/>
            <person name="Darling A."/>
            <person name="Mau B."/>
            <person name="Perna N.T."/>
            <person name="Payne S.M."/>
            <person name="Runyen-Janecky L.J."/>
            <person name="Zhou S."/>
            <person name="Schwartz D.C."/>
            <person name="Blattner F.R."/>
        </authorList>
    </citation>
    <scope>NUCLEOTIDE SEQUENCE [LARGE SCALE GENOMIC DNA]</scope>
    <source>
        <strain>ATCC 700930 / 2457T / Serotype 2a</strain>
    </source>
</reference>
<organism>
    <name type="scientific">Shigella flexneri</name>
    <dbReference type="NCBI Taxonomy" id="623"/>
    <lineage>
        <taxon>Bacteria</taxon>
        <taxon>Pseudomonadati</taxon>
        <taxon>Pseudomonadota</taxon>
        <taxon>Gammaproteobacteria</taxon>
        <taxon>Enterobacterales</taxon>
        <taxon>Enterobacteriaceae</taxon>
        <taxon>Shigella</taxon>
    </lineage>
</organism>
<keyword id="KW-1185">Reference proteome</keyword>
<keyword id="KW-0687">Ribonucleoprotein</keyword>
<keyword id="KW-0689">Ribosomal protein</keyword>
<gene>
    <name evidence="2" type="primary">rpsB</name>
    <name type="ordered locus">SF0159</name>
    <name type="ordered locus">S0162</name>
</gene>
<sequence>MATVSMRDMLKAGVHFGHQTRYWNPKMKPFIFGARNKVHIINLEKTVPMFNEALAELNKIVSRKGKILFVGTKRAASEAVKDAALSCDQFFVNHRWLGGMLTNWKTVRQSIKRLKDLETQSQDGTFDKLTKKEALMRTRELEKLENSLGGIKDMGGLPDALFVIDADHEHIAIKEANNLGIPVFAIVDTNSDPDGVDFVIPGNDDAIRAVTLYLGAVAATVREGRSQDLASQAEESFVEAE</sequence>
<comment type="similarity">
    <text evidence="2">Belongs to the universal ribosomal protein uS2 family.</text>
</comment>